<proteinExistence type="inferred from homology"/>
<accession>Q6GDP4</accession>
<name>ROCA_STAAR</name>
<dbReference type="EC" id="1.2.1.88" evidence="1"/>
<dbReference type="EMBL" id="BX571856">
    <property type="protein sequence ID" value="CAG41613.1"/>
    <property type="molecule type" value="Genomic_DNA"/>
</dbReference>
<dbReference type="SMR" id="Q6GDP4"/>
<dbReference type="KEGG" id="sar:SAR2634"/>
<dbReference type="HOGENOM" id="CLU_005391_0_0_9"/>
<dbReference type="UniPathway" id="UPA00261">
    <property type="reaction ID" value="UER00374"/>
</dbReference>
<dbReference type="Proteomes" id="UP000000596">
    <property type="component" value="Chromosome"/>
</dbReference>
<dbReference type="GO" id="GO:0009898">
    <property type="term" value="C:cytoplasmic side of plasma membrane"/>
    <property type="evidence" value="ECO:0007669"/>
    <property type="project" value="TreeGrafter"/>
</dbReference>
<dbReference type="GO" id="GO:0003842">
    <property type="term" value="F:1-pyrroline-5-carboxylate dehydrogenase activity"/>
    <property type="evidence" value="ECO:0007669"/>
    <property type="project" value="UniProtKB-UniRule"/>
</dbReference>
<dbReference type="GO" id="GO:0006537">
    <property type="term" value="P:glutamate biosynthetic process"/>
    <property type="evidence" value="ECO:0007669"/>
    <property type="project" value="UniProtKB-UniRule"/>
</dbReference>
<dbReference type="GO" id="GO:0010133">
    <property type="term" value="P:proline catabolic process to glutamate"/>
    <property type="evidence" value="ECO:0007669"/>
    <property type="project" value="UniProtKB-UniPathway"/>
</dbReference>
<dbReference type="CDD" id="cd07124">
    <property type="entry name" value="ALDH_PutA-P5CDH-RocA"/>
    <property type="match status" value="1"/>
</dbReference>
<dbReference type="FunFam" id="3.40.309.10:FF:000005">
    <property type="entry name" value="1-pyrroline-5-carboxylate dehydrogenase 1"/>
    <property type="match status" value="1"/>
</dbReference>
<dbReference type="FunFam" id="3.40.605.10:FF:000045">
    <property type="entry name" value="1-pyrroline-5-carboxylate dehydrogenase 1"/>
    <property type="match status" value="1"/>
</dbReference>
<dbReference type="Gene3D" id="3.40.605.10">
    <property type="entry name" value="Aldehyde Dehydrogenase, Chain A, domain 1"/>
    <property type="match status" value="1"/>
</dbReference>
<dbReference type="Gene3D" id="3.40.309.10">
    <property type="entry name" value="Aldehyde Dehydrogenase, Chain A, domain 2"/>
    <property type="match status" value="1"/>
</dbReference>
<dbReference type="HAMAP" id="MF_00733">
    <property type="entry name" value="RocA"/>
    <property type="match status" value="1"/>
</dbReference>
<dbReference type="InterPro" id="IPR016161">
    <property type="entry name" value="Ald_DH/histidinol_DH"/>
</dbReference>
<dbReference type="InterPro" id="IPR016163">
    <property type="entry name" value="Ald_DH_C"/>
</dbReference>
<dbReference type="InterPro" id="IPR016160">
    <property type="entry name" value="Ald_DH_CS_CYS"/>
</dbReference>
<dbReference type="InterPro" id="IPR029510">
    <property type="entry name" value="Ald_DH_CS_GLU"/>
</dbReference>
<dbReference type="InterPro" id="IPR016162">
    <property type="entry name" value="Ald_DH_N"/>
</dbReference>
<dbReference type="InterPro" id="IPR015590">
    <property type="entry name" value="Aldehyde_DH_dom"/>
</dbReference>
<dbReference type="InterPro" id="IPR050485">
    <property type="entry name" value="Proline_metab_enzyme"/>
</dbReference>
<dbReference type="InterPro" id="IPR005932">
    <property type="entry name" value="RocA"/>
</dbReference>
<dbReference type="InterPro" id="IPR047597">
    <property type="entry name" value="RocA_bacillales"/>
</dbReference>
<dbReference type="NCBIfam" id="TIGR01237">
    <property type="entry name" value="D1pyr5carbox2"/>
    <property type="match status" value="1"/>
</dbReference>
<dbReference type="NCBIfam" id="NF002852">
    <property type="entry name" value="PRK03137.1"/>
    <property type="match status" value="1"/>
</dbReference>
<dbReference type="PANTHER" id="PTHR42862">
    <property type="entry name" value="DELTA-1-PYRROLINE-5-CARBOXYLATE DEHYDROGENASE 1, ISOFORM A-RELATED"/>
    <property type="match status" value="1"/>
</dbReference>
<dbReference type="PANTHER" id="PTHR42862:SF1">
    <property type="entry name" value="DELTA-1-PYRROLINE-5-CARBOXYLATE DEHYDROGENASE 2, ISOFORM A-RELATED"/>
    <property type="match status" value="1"/>
</dbReference>
<dbReference type="Pfam" id="PF00171">
    <property type="entry name" value="Aldedh"/>
    <property type="match status" value="1"/>
</dbReference>
<dbReference type="SUPFAM" id="SSF53720">
    <property type="entry name" value="ALDH-like"/>
    <property type="match status" value="1"/>
</dbReference>
<dbReference type="PROSITE" id="PS00070">
    <property type="entry name" value="ALDEHYDE_DEHYDR_CYS"/>
    <property type="match status" value="1"/>
</dbReference>
<dbReference type="PROSITE" id="PS00687">
    <property type="entry name" value="ALDEHYDE_DEHYDR_GLU"/>
    <property type="match status" value="1"/>
</dbReference>
<feature type="chain" id="PRO_0000056517" description="1-pyrroline-5-carboxylate dehydrogenase">
    <location>
        <begin position="1"/>
        <end position="514"/>
    </location>
</feature>
<feature type="active site" evidence="1">
    <location>
        <position position="286"/>
    </location>
</feature>
<feature type="active site" evidence="1">
    <location>
        <position position="320"/>
    </location>
</feature>
<sequence length="514" mass="56868">MVVEFKNEPGYDFSVQENVDMFKKALKDVEKELGQDIPLVINGEKIFKDDKIKSINPADTSQVIANASKATKQDVEDAFKAANEAYKSWKTWSANDRAELMLRVSAIIRRRKAEIAAIMVYEAGKPWDEAVGDAAEGIDFIEYYARSMMDLAQGKPVLDREGEHNKYFYKSIGTGVTIPPWNFPFAIMAGTTLAPVVAGNTVLLKPAEDTPYIAYKLMEILEEAGLPKGVVNFVPGDPKEIGDYLVDHKDTHFVTFTGSRATGTRIYERSAVVQEGQNFLKRVIAEMGGKDAIVVDENIDTDMAAEAIVTSAFGFSGQKCSACSRAIVHKDVYDEVLEKSIKLTKELTLGNTVDNTYMGPVINKKQFDKIKNYIEIGKEEGKLEQGGGTDDSKGYFVEPTIISGLKSKDRIMQEEIFGPVVGFVKVNDFDEAIEVANDTDYGLTGAVITNNREHWIKAVNEFDVGNLYLNRGCTSAVVGYHPFGGFKMSGTDAKTGSPDYLLHFLEQKVVSEMF</sequence>
<organism>
    <name type="scientific">Staphylococcus aureus (strain MRSA252)</name>
    <dbReference type="NCBI Taxonomy" id="282458"/>
    <lineage>
        <taxon>Bacteria</taxon>
        <taxon>Bacillati</taxon>
        <taxon>Bacillota</taxon>
        <taxon>Bacilli</taxon>
        <taxon>Bacillales</taxon>
        <taxon>Staphylococcaceae</taxon>
        <taxon>Staphylococcus</taxon>
    </lineage>
</organism>
<evidence type="ECO:0000255" key="1">
    <source>
        <dbReference type="HAMAP-Rule" id="MF_00733"/>
    </source>
</evidence>
<protein>
    <recommendedName>
        <fullName evidence="1">1-pyrroline-5-carboxylate dehydrogenase</fullName>
        <shortName evidence="1">P5C dehydrogenase</shortName>
        <ecNumber evidence="1">1.2.1.88</ecNumber>
    </recommendedName>
    <alternativeName>
        <fullName evidence="1">L-glutamate gamma-semialdehyde dehydrogenase</fullName>
    </alternativeName>
</protein>
<reference key="1">
    <citation type="journal article" date="2004" name="Proc. Natl. Acad. Sci. U.S.A.">
        <title>Complete genomes of two clinical Staphylococcus aureus strains: evidence for the rapid evolution of virulence and drug resistance.</title>
        <authorList>
            <person name="Holden M.T.G."/>
            <person name="Feil E.J."/>
            <person name="Lindsay J.A."/>
            <person name="Peacock S.J."/>
            <person name="Day N.P.J."/>
            <person name="Enright M.C."/>
            <person name="Foster T.J."/>
            <person name="Moore C.E."/>
            <person name="Hurst L."/>
            <person name="Atkin R."/>
            <person name="Barron A."/>
            <person name="Bason N."/>
            <person name="Bentley S.D."/>
            <person name="Chillingworth C."/>
            <person name="Chillingworth T."/>
            <person name="Churcher C."/>
            <person name="Clark L."/>
            <person name="Corton C."/>
            <person name="Cronin A."/>
            <person name="Doggett J."/>
            <person name="Dowd L."/>
            <person name="Feltwell T."/>
            <person name="Hance Z."/>
            <person name="Harris B."/>
            <person name="Hauser H."/>
            <person name="Holroyd S."/>
            <person name="Jagels K."/>
            <person name="James K.D."/>
            <person name="Lennard N."/>
            <person name="Line A."/>
            <person name="Mayes R."/>
            <person name="Moule S."/>
            <person name="Mungall K."/>
            <person name="Ormond D."/>
            <person name="Quail M.A."/>
            <person name="Rabbinowitsch E."/>
            <person name="Rutherford K.M."/>
            <person name="Sanders M."/>
            <person name="Sharp S."/>
            <person name="Simmonds M."/>
            <person name="Stevens K."/>
            <person name="Whitehead S."/>
            <person name="Barrell B.G."/>
            <person name="Spratt B.G."/>
            <person name="Parkhill J."/>
        </authorList>
    </citation>
    <scope>NUCLEOTIDE SEQUENCE [LARGE SCALE GENOMIC DNA]</scope>
    <source>
        <strain>MRSA252</strain>
    </source>
</reference>
<gene>
    <name evidence="1" type="primary">rocA</name>
    <name type="ordered locus">SAR2634</name>
</gene>
<keyword id="KW-0520">NAD</keyword>
<keyword id="KW-0560">Oxidoreductase</keyword>
<comment type="catalytic activity">
    <reaction evidence="1">
        <text>L-glutamate 5-semialdehyde + NAD(+) + H2O = L-glutamate + NADH + 2 H(+)</text>
        <dbReference type="Rhea" id="RHEA:30235"/>
        <dbReference type="ChEBI" id="CHEBI:15377"/>
        <dbReference type="ChEBI" id="CHEBI:15378"/>
        <dbReference type="ChEBI" id="CHEBI:29985"/>
        <dbReference type="ChEBI" id="CHEBI:57540"/>
        <dbReference type="ChEBI" id="CHEBI:57945"/>
        <dbReference type="ChEBI" id="CHEBI:58066"/>
        <dbReference type="EC" id="1.2.1.88"/>
    </reaction>
</comment>
<comment type="pathway">
    <text evidence="1">Amino-acid degradation; L-proline degradation into L-glutamate; L-glutamate from L-proline: step 2/2.</text>
</comment>
<comment type="similarity">
    <text evidence="1">Belongs to the aldehyde dehydrogenase family. RocA subfamily.</text>
</comment>